<gene>
    <name type="primary">ndhF</name>
</gene>
<comment type="function">
    <text evidence="1">NDH shuttles electrons from NAD(P)H:plastoquinone, via FMN and iron-sulfur (Fe-S) centers, to quinones in the photosynthetic chain and possibly in a chloroplast respiratory chain. The immediate electron acceptor for the enzyme in this species is believed to be plastoquinone. Couples the redox reaction to proton translocation, and thus conserves the redox energy in a proton gradient (By similarity).</text>
</comment>
<comment type="catalytic activity">
    <reaction>
        <text>a plastoquinone + NADH + (n+1) H(+)(in) = a plastoquinol + NAD(+) + n H(+)(out)</text>
        <dbReference type="Rhea" id="RHEA:42608"/>
        <dbReference type="Rhea" id="RHEA-COMP:9561"/>
        <dbReference type="Rhea" id="RHEA-COMP:9562"/>
        <dbReference type="ChEBI" id="CHEBI:15378"/>
        <dbReference type="ChEBI" id="CHEBI:17757"/>
        <dbReference type="ChEBI" id="CHEBI:57540"/>
        <dbReference type="ChEBI" id="CHEBI:57945"/>
        <dbReference type="ChEBI" id="CHEBI:62192"/>
    </reaction>
</comment>
<comment type="catalytic activity">
    <reaction>
        <text>a plastoquinone + NADPH + (n+1) H(+)(in) = a plastoquinol + NADP(+) + n H(+)(out)</text>
        <dbReference type="Rhea" id="RHEA:42612"/>
        <dbReference type="Rhea" id="RHEA-COMP:9561"/>
        <dbReference type="Rhea" id="RHEA-COMP:9562"/>
        <dbReference type="ChEBI" id="CHEBI:15378"/>
        <dbReference type="ChEBI" id="CHEBI:17757"/>
        <dbReference type="ChEBI" id="CHEBI:57783"/>
        <dbReference type="ChEBI" id="CHEBI:58349"/>
        <dbReference type="ChEBI" id="CHEBI:62192"/>
    </reaction>
</comment>
<comment type="subunit">
    <text evidence="1">NDH is composed of at least 16 different subunits, 5 of which are encoded in the nucleus.</text>
</comment>
<comment type="subcellular location">
    <subcellularLocation>
        <location evidence="1">Plastid</location>
        <location evidence="1">Chloroplast thylakoid membrane</location>
        <topology evidence="1">Multi-pass membrane protein</topology>
    </subcellularLocation>
</comment>
<comment type="similarity">
    <text evidence="3">Belongs to the complex I subunit 5 family.</text>
</comment>
<proteinExistence type="inferred from homology"/>
<organism>
    <name type="scientific">Drimys granadensis</name>
    <dbReference type="NCBI Taxonomy" id="224735"/>
    <lineage>
        <taxon>Eukaryota</taxon>
        <taxon>Viridiplantae</taxon>
        <taxon>Streptophyta</taxon>
        <taxon>Embryophyta</taxon>
        <taxon>Tracheophyta</taxon>
        <taxon>Spermatophyta</taxon>
        <taxon>Magnoliopsida</taxon>
        <taxon>Magnoliidae</taxon>
        <taxon>Canellales</taxon>
        <taxon>Winteraceae</taxon>
        <taxon>Drimys</taxon>
    </lineage>
</organism>
<keyword id="KW-0150">Chloroplast</keyword>
<keyword id="KW-0472">Membrane</keyword>
<keyword id="KW-0520">NAD</keyword>
<keyword id="KW-0521">NADP</keyword>
<keyword id="KW-0934">Plastid</keyword>
<keyword id="KW-0618">Plastoquinone</keyword>
<keyword id="KW-0874">Quinone</keyword>
<keyword id="KW-0793">Thylakoid</keyword>
<keyword id="KW-1278">Translocase</keyword>
<keyword id="KW-0812">Transmembrane</keyword>
<keyword id="KW-1133">Transmembrane helix</keyword>
<keyword id="KW-0813">Transport</keyword>
<evidence type="ECO:0000250" key="1"/>
<evidence type="ECO:0000255" key="2"/>
<evidence type="ECO:0000305" key="3"/>
<protein>
    <recommendedName>
        <fullName>NAD(P)H-quinone oxidoreductase subunit 5, chloroplastic</fullName>
        <ecNumber>7.1.1.-</ecNumber>
    </recommendedName>
    <alternativeName>
        <fullName>NAD(P)H dehydrogenase subunit 5</fullName>
    </alternativeName>
    <alternativeName>
        <fullName>NADH-plastoquinone oxidoreductase subunit 5</fullName>
    </alternativeName>
</protein>
<name>NU5C_DRIGR</name>
<dbReference type="EC" id="7.1.1.-"/>
<dbReference type="EMBL" id="DQ887676">
    <property type="protein sequence ID" value="ABH88345.1"/>
    <property type="molecule type" value="Genomic_DNA"/>
</dbReference>
<dbReference type="RefSeq" id="YP_784434.1">
    <property type="nucleotide sequence ID" value="NC_008456.1"/>
</dbReference>
<dbReference type="SMR" id="Q06GU9"/>
<dbReference type="GeneID" id="4363554"/>
<dbReference type="GO" id="GO:0009535">
    <property type="term" value="C:chloroplast thylakoid membrane"/>
    <property type="evidence" value="ECO:0007669"/>
    <property type="project" value="UniProtKB-SubCell"/>
</dbReference>
<dbReference type="GO" id="GO:0008137">
    <property type="term" value="F:NADH dehydrogenase (ubiquinone) activity"/>
    <property type="evidence" value="ECO:0007669"/>
    <property type="project" value="InterPro"/>
</dbReference>
<dbReference type="GO" id="GO:0048038">
    <property type="term" value="F:quinone binding"/>
    <property type="evidence" value="ECO:0007669"/>
    <property type="project" value="UniProtKB-KW"/>
</dbReference>
<dbReference type="GO" id="GO:0042773">
    <property type="term" value="P:ATP synthesis coupled electron transport"/>
    <property type="evidence" value="ECO:0007669"/>
    <property type="project" value="InterPro"/>
</dbReference>
<dbReference type="GO" id="GO:0015990">
    <property type="term" value="P:electron transport coupled proton transport"/>
    <property type="evidence" value="ECO:0007669"/>
    <property type="project" value="TreeGrafter"/>
</dbReference>
<dbReference type="Gene3D" id="1.20.5.2700">
    <property type="match status" value="1"/>
</dbReference>
<dbReference type="InterPro" id="IPR002128">
    <property type="entry name" value="NADH_UbQ_OxRdtase_chlpt_su5_C"/>
</dbReference>
<dbReference type="InterPro" id="IPR018393">
    <property type="entry name" value="NADHpl_OxRdtase_5_subgr"/>
</dbReference>
<dbReference type="InterPro" id="IPR001750">
    <property type="entry name" value="ND/Mrp_TM"/>
</dbReference>
<dbReference type="InterPro" id="IPR003945">
    <property type="entry name" value="NU5C-like"/>
</dbReference>
<dbReference type="InterPro" id="IPR001516">
    <property type="entry name" value="Proton_antipo_N"/>
</dbReference>
<dbReference type="NCBIfam" id="TIGR01974">
    <property type="entry name" value="NDH_I_L"/>
    <property type="match status" value="1"/>
</dbReference>
<dbReference type="NCBIfam" id="NF005141">
    <property type="entry name" value="PRK06590.1"/>
    <property type="match status" value="1"/>
</dbReference>
<dbReference type="PANTHER" id="PTHR42829">
    <property type="entry name" value="NADH-UBIQUINONE OXIDOREDUCTASE CHAIN 5"/>
    <property type="match status" value="1"/>
</dbReference>
<dbReference type="PANTHER" id="PTHR42829:SF2">
    <property type="entry name" value="NADH-UBIQUINONE OXIDOREDUCTASE CHAIN 5"/>
    <property type="match status" value="1"/>
</dbReference>
<dbReference type="Pfam" id="PF01010">
    <property type="entry name" value="Proton_antipo_C"/>
    <property type="match status" value="1"/>
</dbReference>
<dbReference type="Pfam" id="PF00361">
    <property type="entry name" value="Proton_antipo_M"/>
    <property type="match status" value="1"/>
</dbReference>
<dbReference type="Pfam" id="PF00662">
    <property type="entry name" value="Proton_antipo_N"/>
    <property type="match status" value="1"/>
</dbReference>
<dbReference type="PRINTS" id="PR01434">
    <property type="entry name" value="NADHDHGNASE5"/>
</dbReference>
<dbReference type="PRINTS" id="PR01435">
    <property type="entry name" value="NPOXDRDTASE5"/>
</dbReference>
<geneLocation type="chloroplast"/>
<sequence>MQPIYQYAWIIPFVPLPVTMSIGLGLLLVPTATKNLRRMWAFPSVSLLSIVMVFSADLSVQQIDGSSIYQYLWSWTINNDFSLEFGHLIDPLTSIMSILITTVGIMVLIYSDKYMSHDQGYLRFFAYMSFSNTSMLGLVTSSNLIQIYIFWELVGMCSYLLIGFWFTRPIAANACQKALVTNRVGDFGLLLGILGLYWITGSFEFRDLFEIFNNLIHNNGVNSLFATLCASLLFAGAVAKSAQFPLHVWLPDAMEGPTPISALIHAATMVAAGIFLVARLLPLFTVIPYIMNLISLIGVITVLLGATLALAQRDIKRSLAYSTMSQLGYIMLAPGIGSYRAALFHLITHAYSKALLFLGSGSIIHSMEPIVGYSPDKSQNMVLMGGLRKYVPITKMTFLLGTLSLCGIPPLACFWSKDEILNDSWLYSPIFAIIACATAGLTAFYMFRTYLLTFEGYLYAHFQNYSGTQNSSFYSISIWGKEEPKLVNRNLLLSTINKNEKVSFFSKKTCKINGNVRNLMRSFSTHFDNKDTSMYPHESDNTMLLPLLVLVLFTLFVGFIGIPFDQGVMGLDILSKWLTPSINLLHQNSNYSVNWYEFATNAFFSVSIAYFGIFIASLLYGSVYLFFQNLELINSFVKIGPKRIFLDQIINVIYNWSYNRGYIDVFYATSLTKGIRGLAKLTHFFDRRVIDGIMNGVGVSSFFVGEGIKYLGGGRISSYLFVYLSYVSIFLLIYIFFFRKVESIKLFQTKNGIPLYL</sequence>
<reference key="1">
    <citation type="journal article" date="2006" name="BMC Evol. Biol.">
        <title>Complete plastid genome sequences of Drimys, Liriodendron, and Piper: implications for the phylogenetic relationships of magnoliids.</title>
        <authorList>
            <person name="Cai Z."/>
            <person name="Penaflor C."/>
            <person name="Kuehl J.V."/>
            <person name="Leebens-Mack J."/>
            <person name="Carlson J.E."/>
            <person name="dePamphilis C.W."/>
            <person name="Boore J.L."/>
            <person name="Jansen R.K."/>
        </authorList>
    </citation>
    <scope>NUCLEOTIDE SEQUENCE [LARGE SCALE GENOMIC DNA]</scope>
</reference>
<feature type="chain" id="PRO_0000360933" description="NAD(P)H-quinone oxidoreductase subunit 5, chloroplastic">
    <location>
        <begin position="1"/>
        <end position="757"/>
    </location>
</feature>
<feature type="transmembrane region" description="Helical" evidence="2">
    <location>
        <begin position="9"/>
        <end position="29"/>
    </location>
</feature>
<feature type="transmembrane region" description="Helical" evidence="2">
    <location>
        <begin position="40"/>
        <end position="60"/>
    </location>
</feature>
<feature type="transmembrane region" description="Helical" evidence="2">
    <location>
        <begin position="89"/>
        <end position="109"/>
    </location>
</feature>
<feature type="transmembrane region" description="Helical" evidence="2">
    <location>
        <begin position="122"/>
        <end position="139"/>
    </location>
</feature>
<feature type="transmembrane region" description="Helical" evidence="2">
    <location>
        <begin position="147"/>
        <end position="167"/>
    </location>
</feature>
<feature type="transmembrane region" description="Helical" evidence="2">
    <location>
        <begin position="185"/>
        <end position="205"/>
    </location>
</feature>
<feature type="transmembrane region" description="Helical" evidence="2">
    <location>
        <begin position="219"/>
        <end position="239"/>
    </location>
</feature>
<feature type="transmembrane region" description="Helical" evidence="2">
    <location>
        <begin position="258"/>
        <end position="278"/>
    </location>
</feature>
<feature type="transmembrane region" description="Helical" evidence="2">
    <location>
        <begin position="280"/>
        <end position="300"/>
    </location>
</feature>
<feature type="transmembrane region" description="Helical" evidence="2">
    <location>
        <begin position="327"/>
        <end position="347"/>
    </location>
</feature>
<feature type="transmembrane region" description="Helical" evidence="2">
    <location>
        <begin position="354"/>
        <end position="374"/>
    </location>
</feature>
<feature type="transmembrane region" description="Helical" evidence="2">
    <location>
        <begin position="396"/>
        <end position="416"/>
    </location>
</feature>
<feature type="transmembrane region" description="Helical" evidence="2">
    <location>
        <begin position="425"/>
        <end position="445"/>
    </location>
</feature>
<feature type="transmembrane region" description="Helical" evidence="2">
    <location>
        <begin position="544"/>
        <end position="564"/>
    </location>
</feature>
<feature type="transmembrane region" description="Helical" evidence="2">
    <location>
        <begin position="607"/>
        <end position="627"/>
    </location>
</feature>
<feature type="transmembrane region" description="Helical" evidence="2">
    <location>
        <begin position="692"/>
        <end position="712"/>
    </location>
</feature>
<feature type="transmembrane region" description="Helical" evidence="2">
    <location>
        <begin position="718"/>
        <end position="738"/>
    </location>
</feature>
<accession>Q06GU9</accession>